<keyword id="KW-0028">Amino-acid biosynthesis</keyword>
<keyword id="KW-0055">Arginine biosynthesis</keyword>
<keyword id="KW-0067">ATP-binding</keyword>
<keyword id="KW-0436">Ligase</keyword>
<keyword id="KW-0460">Magnesium</keyword>
<keyword id="KW-0464">Manganese</keyword>
<keyword id="KW-0479">Metal-binding</keyword>
<keyword id="KW-0547">Nucleotide-binding</keyword>
<keyword id="KW-0665">Pyrimidine biosynthesis</keyword>
<keyword id="KW-0677">Repeat</keyword>
<proteinExistence type="inferred from homology"/>
<protein>
    <recommendedName>
        <fullName evidence="1">Carbamoyl phosphate synthase large chain</fullName>
        <ecNumber evidence="1">6.3.4.16</ecNumber>
        <ecNumber evidence="1">6.3.5.5</ecNumber>
    </recommendedName>
    <alternativeName>
        <fullName evidence="1">Carbamoyl phosphate synthetase ammonia chain</fullName>
    </alternativeName>
</protein>
<gene>
    <name evidence="1" type="primary">carB</name>
    <name type="ordered locus">USA300HOU_1141</name>
</gene>
<accession>A8Z3P0</accession>
<sequence>MPKRNDIKTILVIGSGPIIIGQAAEFDYAGTQACLALKEEGYRVILVNSNPATIMTDKEIADKVYIEPLTHDFIARIIRKEQPDALLPTLGGQTGLNMAIQLHESGVLQDNNVQLLGTELTSIQQAEDREMFRTLMNDLNVPVPESDIVNTVEQAFKFKEQVGYPLIVRPAFTMGGTGGGICHNDEELHEIVSNGLHYSPATQCLLEKSIAGFKEIEYEVMRDKNDNAIVVCNMENIDPVGIHTGDSIVVAPSQTLSDVEYQMLRDVSLKVIRALGIEGGCNVQLALDPHSFDYYIIEVNPRVSRSSALASKATGYPIAKLAAKIAVGLTLDEMLNPITGTSYAAFEPTLDYVISKIPRFPFDKFEKGERELGTQMKATGEVMAIGRTYEESLLKAIRSLEYGVHHLGLPNGESFDLDYIKERISHQDDERLFFIGEAIRRGTTLEEIHNMTQIDYFFLHKFQNIIDIEHQLKEHQGDLEYLKYAKDYGFSDKTIAHRFNMTEEEVYQLRMENDIKPVYKMVDTCAAEFESSTPYYYGTYETENESIVTDKEKILVLGSGPIRIGQGVEFDYATVHAVWAIQKAGYEAIIVNNNPETVSTDFSISDKLYFEPLTEEDVMNIINLEKPKGVVVQFGGQTAINLADKLAKHGVKILGTSLENLNRAEDRKEFEALLRKINVPQPQGKTATSPEEALANAAEIGYPVVVRPSYVLGGRAMEIVDNDKELENYMTQAVKASPEHPVLVDRYLTGKEIEVDAICDGETVIIPGIMEHIERAGVHSGDSIAVYPPQTLTEDELATLEDYTIKLAKGLNIIGLINIQFVIAHDGVYVLEVNPRSSRTVPFLSKITDIPMAQLAMRAIIGEKLTDMGYQEGVQPYAEGVFVKAPVFSFNKLKNVDITLGPEMKSTGEVMGKDTTLEKALFKGLTGSGVEVKDHGTVLMTVSDKDKEEVVKLAQRLNEVGYKILATSGTANKLAEYDIPAEVVGKIGGENDLLTRIQNGDVQIVINTMTKGKEVERDGFQIRRTTVENGIPCLTSLDTANALTNVIESMTFTMRQM</sequence>
<name>CARB_STAAT</name>
<organism>
    <name type="scientific">Staphylococcus aureus (strain USA300 / TCH1516)</name>
    <dbReference type="NCBI Taxonomy" id="451516"/>
    <lineage>
        <taxon>Bacteria</taxon>
        <taxon>Bacillati</taxon>
        <taxon>Bacillota</taxon>
        <taxon>Bacilli</taxon>
        <taxon>Bacillales</taxon>
        <taxon>Staphylococcaceae</taxon>
        <taxon>Staphylococcus</taxon>
    </lineage>
</organism>
<reference key="1">
    <citation type="journal article" date="2007" name="BMC Microbiol.">
        <title>Subtle genetic changes enhance virulence of methicillin resistant and sensitive Staphylococcus aureus.</title>
        <authorList>
            <person name="Highlander S.K."/>
            <person name="Hulten K.G."/>
            <person name="Qin X."/>
            <person name="Jiang H."/>
            <person name="Yerrapragada S."/>
            <person name="Mason E.O. Jr."/>
            <person name="Shang Y."/>
            <person name="Williams T.M."/>
            <person name="Fortunov R.M."/>
            <person name="Liu Y."/>
            <person name="Igboeli O."/>
            <person name="Petrosino J."/>
            <person name="Tirumalai M."/>
            <person name="Uzman A."/>
            <person name="Fox G.E."/>
            <person name="Cardenas A.M."/>
            <person name="Muzny D.M."/>
            <person name="Hemphill L."/>
            <person name="Ding Y."/>
            <person name="Dugan S."/>
            <person name="Blyth P.R."/>
            <person name="Buhay C.J."/>
            <person name="Dinh H.H."/>
            <person name="Hawes A.C."/>
            <person name="Holder M."/>
            <person name="Kovar C.L."/>
            <person name="Lee S.L."/>
            <person name="Liu W."/>
            <person name="Nazareth L.V."/>
            <person name="Wang Q."/>
            <person name="Zhou J."/>
            <person name="Kaplan S.L."/>
            <person name="Weinstock G.M."/>
        </authorList>
    </citation>
    <scope>NUCLEOTIDE SEQUENCE [LARGE SCALE GENOMIC DNA]</scope>
    <source>
        <strain>USA300 / TCH1516</strain>
    </source>
</reference>
<feature type="chain" id="PRO_1000085564" description="Carbamoyl phosphate synthase large chain">
    <location>
        <begin position="1"/>
        <end position="1057"/>
    </location>
</feature>
<feature type="domain" description="ATP-grasp 1" evidence="1">
    <location>
        <begin position="133"/>
        <end position="327"/>
    </location>
</feature>
<feature type="domain" description="ATP-grasp 2" evidence="1">
    <location>
        <begin position="671"/>
        <end position="861"/>
    </location>
</feature>
<feature type="domain" description="MGS-like" evidence="1">
    <location>
        <begin position="930"/>
        <end position="1057"/>
    </location>
</feature>
<feature type="region of interest" description="Carboxyphosphate synthetic domain" evidence="1">
    <location>
        <begin position="1"/>
        <end position="401"/>
    </location>
</feature>
<feature type="region of interest" description="Oligomerization domain" evidence="1">
    <location>
        <begin position="402"/>
        <end position="546"/>
    </location>
</feature>
<feature type="region of interest" description="Carbamoyl phosphate synthetic domain" evidence="1">
    <location>
        <begin position="547"/>
        <end position="929"/>
    </location>
</feature>
<feature type="region of interest" description="Allosteric domain" evidence="1">
    <location>
        <begin position="930"/>
        <end position="1057"/>
    </location>
</feature>
<feature type="binding site" evidence="1">
    <location>
        <position position="129"/>
    </location>
    <ligand>
        <name>ATP</name>
        <dbReference type="ChEBI" id="CHEBI:30616"/>
        <label>1</label>
    </ligand>
</feature>
<feature type="binding site" evidence="1">
    <location>
        <position position="169"/>
    </location>
    <ligand>
        <name>ATP</name>
        <dbReference type="ChEBI" id="CHEBI:30616"/>
        <label>1</label>
    </ligand>
</feature>
<feature type="binding site" evidence="1">
    <location>
        <position position="175"/>
    </location>
    <ligand>
        <name>ATP</name>
        <dbReference type="ChEBI" id="CHEBI:30616"/>
        <label>1</label>
    </ligand>
</feature>
<feature type="binding site" evidence="1">
    <location>
        <position position="176"/>
    </location>
    <ligand>
        <name>ATP</name>
        <dbReference type="ChEBI" id="CHEBI:30616"/>
        <label>1</label>
    </ligand>
</feature>
<feature type="binding site" evidence="1">
    <location>
        <position position="208"/>
    </location>
    <ligand>
        <name>ATP</name>
        <dbReference type="ChEBI" id="CHEBI:30616"/>
        <label>1</label>
    </ligand>
</feature>
<feature type="binding site" evidence="1">
    <location>
        <position position="210"/>
    </location>
    <ligand>
        <name>ATP</name>
        <dbReference type="ChEBI" id="CHEBI:30616"/>
        <label>1</label>
    </ligand>
</feature>
<feature type="binding site" evidence="1">
    <location>
        <position position="215"/>
    </location>
    <ligand>
        <name>ATP</name>
        <dbReference type="ChEBI" id="CHEBI:30616"/>
        <label>1</label>
    </ligand>
</feature>
<feature type="binding site" evidence="1">
    <location>
        <position position="241"/>
    </location>
    <ligand>
        <name>ATP</name>
        <dbReference type="ChEBI" id="CHEBI:30616"/>
        <label>1</label>
    </ligand>
</feature>
<feature type="binding site" evidence="1">
    <location>
        <position position="242"/>
    </location>
    <ligand>
        <name>ATP</name>
        <dbReference type="ChEBI" id="CHEBI:30616"/>
        <label>1</label>
    </ligand>
</feature>
<feature type="binding site" evidence="1">
    <location>
        <position position="243"/>
    </location>
    <ligand>
        <name>ATP</name>
        <dbReference type="ChEBI" id="CHEBI:30616"/>
        <label>1</label>
    </ligand>
</feature>
<feature type="binding site" evidence="1">
    <location>
        <position position="284"/>
    </location>
    <ligand>
        <name>ATP</name>
        <dbReference type="ChEBI" id="CHEBI:30616"/>
        <label>1</label>
    </ligand>
</feature>
<feature type="binding site" evidence="1">
    <location>
        <position position="284"/>
    </location>
    <ligand>
        <name>Mg(2+)</name>
        <dbReference type="ChEBI" id="CHEBI:18420"/>
        <label>1</label>
    </ligand>
</feature>
<feature type="binding site" evidence="1">
    <location>
        <position position="284"/>
    </location>
    <ligand>
        <name>Mn(2+)</name>
        <dbReference type="ChEBI" id="CHEBI:29035"/>
        <label>1</label>
    </ligand>
</feature>
<feature type="binding site" evidence="1">
    <location>
        <position position="298"/>
    </location>
    <ligand>
        <name>ATP</name>
        <dbReference type="ChEBI" id="CHEBI:30616"/>
        <label>1</label>
    </ligand>
</feature>
<feature type="binding site" evidence="1">
    <location>
        <position position="298"/>
    </location>
    <ligand>
        <name>Mg(2+)</name>
        <dbReference type="ChEBI" id="CHEBI:18420"/>
        <label>1</label>
    </ligand>
</feature>
<feature type="binding site" evidence="1">
    <location>
        <position position="298"/>
    </location>
    <ligand>
        <name>Mg(2+)</name>
        <dbReference type="ChEBI" id="CHEBI:18420"/>
        <label>2</label>
    </ligand>
</feature>
<feature type="binding site" evidence="1">
    <location>
        <position position="298"/>
    </location>
    <ligand>
        <name>Mn(2+)</name>
        <dbReference type="ChEBI" id="CHEBI:29035"/>
        <label>1</label>
    </ligand>
</feature>
<feature type="binding site" evidence="1">
    <location>
        <position position="298"/>
    </location>
    <ligand>
        <name>Mn(2+)</name>
        <dbReference type="ChEBI" id="CHEBI:29035"/>
        <label>2</label>
    </ligand>
</feature>
<feature type="binding site" evidence="1">
    <location>
        <position position="300"/>
    </location>
    <ligand>
        <name>Mg(2+)</name>
        <dbReference type="ChEBI" id="CHEBI:18420"/>
        <label>2</label>
    </ligand>
</feature>
<feature type="binding site" evidence="1">
    <location>
        <position position="300"/>
    </location>
    <ligand>
        <name>Mn(2+)</name>
        <dbReference type="ChEBI" id="CHEBI:29035"/>
        <label>2</label>
    </ligand>
</feature>
<feature type="binding site" evidence="1">
    <location>
        <position position="707"/>
    </location>
    <ligand>
        <name>ATP</name>
        <dbReference type="ChEBI" id="CHEBI:30616"/>
        <label>2</label>
    </ligand>
</feature>
<feature type="binding site" evidence="1">
    <location>
        <position position="746"/>
    </location>
    <ligand>
        <name>ATP</name>
        <dbReference type="ChEBI" id="CHEBI:30616"/>
        <label>2</label>
    </ligand>
</feature>
<feature type="binding site" evidence="1">
    <location>
        <position position="748"/>
    </location>
    <ligand>
        <name>ATP</name>
        <dbReference type="ChEBI" id="CHEBI:30616"/>
        <label>2</label>
    </ligand>
</feature>
<feature type="binding site" evidence="1">
    <location>
        <position position="752"/>
    </location>
    <ligand>
        <name>ATP</name>
        <dbReference type="ChEBI" id="CHEBI:30616"/>
        <label>2</label>
    </ligand>
</feature>
<feature type="binding site" evidence="1">
    <location>
        <position position="777"/>
    </location>
    <ligand>
        <name>ATP</name>
        <dbReference type="ChEBI" id="CHEBI:30616"/>
        <label>2</label>
    </ligand>
</feature>
<feature type="binding site" evidence="1">
    <location>
        <position position="778"/>
    </location>
    <ligand>
        <name>ATP</name>
        <dbReference type="ChEBI" id="CHEBI:30616"/>
        <label>2</label>
    </ligand>
</feature>
<feature type="binding site" evidence="1">
    <location>
        <position position="779"/>
    </location>
    <ligand>
        <name>ATP</name>
        <dbReference type="ChEBI" id="CHEBI:30616"/>
        <label>2</label>
    </ligand>
</feature>
<feature type="binding site" evidence="1">
    <location>
        <position position="780"/>
    </location>
    <ligand>
        <name>ATP</name>
        <dbReference type="ChEBI" id="CHEBI:30616"/>
        <label>2</label>
    </ligand>
</feature>
<feature type="binding site" evidence="1">
    <location>
        <position position="820"/>
    </location>
    <ligand>
        <name>ATP</name>
        <dbReference type="ChEBI" id="CHEBI:30616"/>
        <label>2</label>
    </ligand>
</feature>
<feature type="binding site" evidence="1">
    <location>
        <position position="820"/>
    </location>
    <ligand>
        <name>Mg(2+)</name>
        <dbReference type="ChEBI" id="CHEBI:18420"/>
        <label>3</label>
    </ligand>
</feature>
<feature type="binding site" evidence="1">
    <location>
        <position position="820"/>
    </location>
    <ligand>
        <name>Mn(2+)</name>
        <dbReference type="ChEBI" id="CHEBI:29035"/>
        <label>3</label>
    </ligand>
</feature>
<feature type="binding site" evidence="1">
    <location>
        <position position="832"/>
    </location>
    <ligand>
        <name>ATP</name>
        <dbReference type="ChEBI" id="CHEBI:30616"/>
        <label>2</label>
    </ligand>
</feature>
<feature type="binding site" evidence="1">
    <location>
        <position position="832"/>
    </location>
    <ligand>
        <name>Mg(2+)</name>
        <dbReference type="ChEBI" id="CHEBI:18420"/>
        <label>3</label>
    </ligand>
</feature>
<feature type="binding site" evidence="1">
    <location>
        <position position="832"/>
    </location>
    <ligand>
        <name>Mg(2+)</name>
        <dbReference type="ChEBI" id="CHEBI:18420"/>
        <label>4</label>
    </ligand>
</feature>
<feature type="binding site" evidence="1">
    <location>
        <position position="832"/>
    </location>
    <ligand>
        <name>Mn(2+)</name>
        <dbReference type="ChEBI" id="CHEBI:29035"/>
        <label>3</label>
    </ligand>
</feature>
<feature type="binding site" evidence="1">
    <location>
        <position position="832"/>
    </location>
    <ligand>
        <name>Mn(2+)</name>
        <dbReference type="ChEBI" id="CHEBI:29035"/>
        <label>4</label>
    </ligand>
</feature>
<feature type="binding site" evidence="1">
    <location>
        <position position="834"/>
    </location>
    <ligand>
        <name>Mg(2+)</name>
        <dbReference type="ChEBI" id="CHEBI:18420"/>
        <label>4</label>
    </ligand>
</feature>
<feature type="binding site" evidence="1">
    <location>
        <position position="834"/>
    </location>
    <ligand>
        <name>Mn(2+)</name>
        <dbReference type="ChEBI" id="CHEBI:29035"/>
        <label>4</label>
    </ligand>
</feature>
<evidence type="ECO:0000255" key="1">
    <source>
        <dbReference type="HAMAP-Rule" id="MF_01210"/>
    </source>
</evidence>
<comment type="function">
    <text evidence="1">Large subunit of the glutamine-dependent carbamoyl phosphate synthetase (CPSase). CPSase catalyzes the formation of carbamoyl phosphate from the ammonia moiety of glutamine, carbonate, and phosphate donated by ATP, constituting the first step of 2 biosynthetic pathways, one leading to arginine and/or urea and the other to pyrimidine nucleotides. The large subunit (synthetase) binds the substrates ammonia (free or transferred from glutamine from the small subunit), hydrogencarbonate and ATP and carries out an ATP-coupled ligase reaction, activating hydrogencarbonate by forming carboxy phosphate which reacts with ammonia to form carbamoyl phosphate.</text>
</comment>
<comment type="catalytic activity">
    <reaction evidence="1">
        <text>hydrogencarbonate + L-glutamine + 2 ATP + H2O = carbamoyl phosphate + L-glutamate + 2 ADP + phosphate + 2 H(+)</text>
        <dbReference type="Rhea" id="RHEA:18633"/>
        <dbReference type="ChEBI" id="CHEBI:15377"/>
        <dbReference type="ChEBI" id="CHEBI:15378"/>
        <dbReference type="ChEBI" id="CHEBI:17544"/>
        <dbReference type="ChEBI" id="CHEBI:29985"/>
        <dbReference type="ChEBI" id="CHEBI:30616"/>
        <dbReference type="ChEBI" id="CHEBI:43474"/>
        <dbReference type="ChEBI" id="CHEBI:58228"/>
        <dbReference type="ChEBI" id="CHEBI:58359"/>
        <dbReference type="ChEBI" id="CHEBI:456216"/>
        <dbReference type="EC" id="6.3.5.5"/>
    </reaction>
</comment>
<comment type="catalytic activity">
    <molecule>Carbamoyl phosphate synthase large chain</molecule>
    <reaction evidence="1">
        <text>hydrogencarbonate + NH4(+) + 2 ATP = carbamoyl phosphate + 2 ADP + phosphate + 2 H(+)</text>
        <dbReference type="Rhea" id="RHEA:18029"/>
        <dbReference type="ChEBI" id="CHEBI:15378"/>
        <dbReference type="ChEBI" id="CHEBI:17544"/>
        <dbReference type="ChEBI" id="CHEBI:28938"/>
        <dbReference type="ChEBI" id="CHEBI:30616"/>
        <dbReference type="ChEBI" id="CHEBI:43474"/>
        <dbReference type="ChEBI" id="CHEBI:58228"/>
        <dbReference type="ChEBI" id="CHEBI:456216"/>
        <dbReference type="EC" id="6.3.4.16"/>
    </reaction>
</comment>
<comment type="cofactor">
    <cofactor evidence="1">
        <name>Mg(2+)</name>
        <dbReference type="ChEBI" id="CHEBI:18420"/>
    </cofactor>
    <cofactor evidence="1">
        <name>Mn(2+)</name>
        <dbReference type="ChEBI" id="CHEBI:29035"/>
    </cofactor>
    <text evidence="1">Binds 4 Mg(2+) or Mn(2+) ions per subunit.</text>
</comment>
<comment type="pathway">
    <text evidence="1">Amino-acid biosynthesis; L-arginine biosynthesis; carbamoyl phosphate from bicarbonate: step 1/1.</text>
</comment>
<comment type="pathway">
    <text evidence="1">Pyrimidine metabolism; UMP biosynthesis via de novo pathway; (S)-dihydroorotate from bicarbonate: step 1/3.</text>
</comment>
<comment type="subunit">
    <text evidence="1">Composed of two chains; the small (or glutamine) chain promotes the hydrolysis of glutamine to ammonia, which is used by the large (or ammonia) chain to synthesize carbamoyl phosphate. Tetramer of heterodimers (alpha,beta)4.</text>
</comment>
<comment type="domain">
    <text evidence="1">The large subunit is composed of 2 ATP-grasp domains that are involved in binding the 2 ATP molecules needed for carbamoyl phosphate synthesis. The N-terminal ATP-grasp domain (referred to as the carboxyphosphate synthetic component) catalyzes the ATP-dependent phosphorylation of hydrogencarbonate to carboxyphosphate and the subsequent nucleophilic attack by ammonia to form a carbamate intermediate. The C-terminal ATP-grasp domain (referred to as the carbamoyl phosphate synthetic component) then catalyzes the phosphorylation of carbamate with the second ATP to form the end product carbamoyl phosphate. The reactive and unstable enzyme intermediates are sequentially channeled from one active site to the next through the interior of the protein over a distance of at least 96 A.</text>
</comment>
<comment type="similarity">
    <text evidence="1">Belongs to the CarB family.</text>
</comment>
<dbReference type="EC" id="6.3.4.16" evidence="1"/>
<dbReference type="EC" id="6.3.5.5" evidence="1"/>
<dbReference type="EMBL" id="CP000730">
    <property type="protein sequence ID" value="ABX29156.1"/>
    <property type="molecule type" value="Genomic_DNA"/>
</dbReference>
<dbReference type="RefSeq" id="WP_001126264.1">
    <property type="nucleotide sequence ID" value="NC_010079.1"/>
</dbReference>
<dbReference type="SMR" id="A8Z3P0"/>
<dbReference type="KEGG" id="sax:USA300HOU_1141"/>
<dbReference type="HOGENOM" id="CLU_000513_1_2_9"/>
<dbReference type="UniPathway" id="UPA00068">
    <property type="reaction ID" value="UER00171"/>
</dbReference>
<dbReference type="UniPathway" id="UPA00070">
    <property type="reaction ID" value="UER00115"/>
</dbReference>
<dbReference type="GO" id="GO:0005737">
    <property type="term" value="C:cytoplasm"/>
    <property type="evidence" value="ECO:0007669"/>
    <property type="project" value="TreeGrafter"/>
</dbReference>
<dbReference type="GO" id="GO:0005524">
    <property type="term" value="F:ATP binding"/>
    <property type="evidence" value="ECO:0007669"/>
    <property type="project" value="UniProtKB-UniRule"/>
</dbReference>
<dbReference type="GO" id="GO:0004087">
    <property type="term" value="F:carbamoyl-phosphate synthase (ammonia) activity"/>
    <property type="evidence" value="ECO:0007669"/>
    <property type="project" value="RHEA"/>
</dbReference>
<dbReference type="GO" id="GO:0004088">
    <property type="term" value="F:carbamoyl-phosphate synthase (glutamine-hydrolyzing) activity"/>
    <property type="evidence" value="ECO:0007669"/>
    <property type="project" value="UniProtKB-UniRule"/>
</dbReference>
<dbReference type="GO" id="GO:0046872">
    <property type="term" value="F:metal ion binding"/>
    <property type="evidence" value="ECO:0007669"/>
    <property type="project" value="UniProtKB-KW"/>
</dbReference>
<dbReference type="GO" id="GO:0044205">
    <property type="term" value="P:'de novo' UMP biosynthetic process"/>
    <property type="evidence" value="ECO:0007669"/>
    <property type="project" value="UniProtKB-UniRule"/>
</dbReference>
<dbReference type="GO" id="GO:0006541">
    <property type="term" value="P:glutamine metabolic process"/>
    <property type="evidence" value="ECO:0007669"/>
    <property type="project" value="TreeGrafter"/>
</dbReference>
<dbReference type="GO" id="GO:0006526">
    <property type="term" value="P:L-arginine biosynthetic process"/>
    <property type="evidence" value="ECO:0007669"/>
    <property type="project" value="UniProtKB-UniRule"/>
</dbReference>
<dbReference type="CDD" id="cd01424">
    <property type="entry name" value="MGS_CPS_II"/>
    <property type="match status" value="1"/>
</dbReference>
<dbReference type="FunFam" id="1.10.1030.10:FF:000002">
    <property type="entry name" value="Carbamoyl-phosphate synthase large chain"/>
    <property type="match status" value="1"/>
</dbReference>
<dbReference type="FunFam" id="3.30.1490.20:FF:000001">
    <property type="entry name" value="Carbamoyl-phosphate synthase large chain"/>
    <property type="match status" value="1"/>
</dbReference>
<dbReference type="FunFam" id="3.30.470.20:FF:000001">
    <property type="entry name" value="Carbamoyl-phosphate synthase large chain"/>
    <property type="match status" value="1"/>
</dbReference>
<dbReference type="FunFam" id="3.30.470.20:FF:000026">
    <property type="entry name" value="Carbamoyl-phosphate synthase large chain"/>
    <property type="match status" value="1"/>
</dbReference>
<dbReference type="FunFam" id="3.40.50.1380:FF:000011">
    <property type="entry name" value="Carbamoyl-phosphate synthase large chain"/>
    <property type="match status" value="1"/>
</dbReference>
<dbReference type="FunFam" id="3.40.50.20:FF:000001">
    <property type="entry name" value="Carbamoyl-phosphate synthase large chain"/>
    <property type="match status" value="2"/>
</dbReference>
<dbReference type="Gene3D" id="3.40.50.20">
    <property type="match status" value="2"/>
</dbReference>
<dbReference type="Gene3D" id="3.30.1490.20">
    <property type="entry name" value="ATP-grasp fold, A domain"/>
    <property type="match status" value="1"/>
</dbReference>
<dbReference type="Gene3D" id="3.30.470.20">
    <property type="entry name" value="ATP-grasp fold, B domain"/>
    <property type="match status" value="2"/>
</dbReference>
<dbReference type="Gene3D" id="1.10.1030.10">
    <property type="entry name" value="Carbamoyl-phosphate synthetase, large subunit oligomerisation domain"/>
    <property type="match status" value="1"/>
</dbReference>
<dbReference type="Gene3D" id="3.40.50.1380">
    <property type="entry name" value="Methylglyoxal synthase-like domain"/>
    <property type="match status" value="1"/>
</dbReference>
<dbReference type="HAMAP" id="MF_01210_A">
    <property type="entry name" value="CPSase_L_chain_A"/>
    <property type="match status" value="1"/>
</dbReference>
<dbReference type="HAMAP" id="MF_01210_B">
    <property type="entry name" value="CPSase_L_chain_B"/>
    <property type="match status" value="1"/>
</dbReference>
<dbReference type="InterPro" id="IPR011761">
    <property type="entry name" value="ATP-grasp"/>
</dbReference>
<dbReference type="InterPro" id="IPR013815">
    <property type="entry name" value="ATP_grasp_subdomain_1"/>
</dbReference>
<dbReference type="InterPro" id="IPR006275">
    <property type="entry name" value="CarbamoylP_synth_lsu"/>
</dbReference>
<dbReference type="InterPro" id="IPR005480">
    <property type="entry name" value="CarbamoylP_synth_lsu_oligo"/>
</dbReference>
<dbReference type="InterPro" id="IPR036897">
    <property type="entry name" value="CarbamoylP_synth_lsu_oligo_sf"/>
</dbReference>
<dbReference type="InterPro" id="IPR005479">
    <property type="entry name" value="CbamoylP_synth_lsu-like_ATP-bd"/>
</dbReference>
<dbReference type="InterPro" id="IPR005483">
    <property type="entry name" value="CbamoylP_synth_lsu_CPSase_dom"/>
</dbReference>
<dbReference type="InterPro" id="IPR011607">
    <property type="entry name" value="MGS-like_dom"/>
</dbReference>
<dbReference type="InterPro" id="IPR036914">
    <property type="entry name" value="MGS-like_dom_sf"/>
</dbReference>
<dbReference type="InterPro" id="IPR033937">
    <property type="entry name" value="MGS_CPS_CarB"/>
</dbReference>
<dbReference type="InterPro" id="IPR016185">
    <property type="entry name" value="PreATP-grasp_dom_sf"/>
</dbReference>
<dbReference type="NCBIfam" id="TIGR01369">
    <property type="entry name" value="CPSaseII_lrg"/>
    <property type="match status" value="1"/>
</dbReference>
<dbReference type="NCBIfam" id="NF003671">
    <property type="entry name" value="PRK05294.1"/>
    <property type="match status" value="1"/>
</dbReference>
<dbReference type="NCBIfam" id="NF009455">
    <property type="entry name" value="PRK12815.1"/>
    <property type="match status" value="1"/>
</dbReference>
<dbReference type="PANTHER" id="PTHR11405:SF53">
    <property type="entry name" value="CARBAMOYL-PHOSPHATE SYNTHASE [AMMONIA], MITOCHONDRIAL"/>
    <property type="match status" value="1"/>
</dbReference>
<dbReference type="PANTHER" id="PTHR11405">
    <property type="entry name" value="CARBAMOYLTRANSFERASE FAMILY MEMBER"/>
    <property type="match status" value="1"/>
</dbReference>
<dbReference type="Pfam" id="PF02786">
    <property type="entry name" value="CPSase_L_D2"/>
    <property type="match status" value="2"/>
</dbReference>
<dbReference type="Pfam" id="PF02787">
    <property type="entry name" value="CPSase_L_D3"/>
    <property type="match status" value="1"/>
</dbReference>
<dbReference type="Pfam" id="PF02142">
    <property type="entry name" value="MGS"/>
    <property type="match status" value="1"/>
</dbReference>
<dbReference type="PRINTS" id="PR00098">
    <property type="entry name" value="CPSASE"/>
</dbReference>
<dbReference type="SMART" id="SM01096">
    <property type="entry name" value="CPSase_L_D3"/>
    <property type="match status" value="1"/>
</dbReference>
<dbReference type="SMART" id="SM01209">
    <property type="entry name" value="GARS_A"/>
    <property type="match status" value="1"/>
</dbReference>
<dbReference type="SMART" id="SM00851">
    <property type="entry name" value="MGS"/>
    <property type="match status" value="1"/>
</dbReference>
<dbReference type="SUPFAM" id="SSF48108">
    <property type="entry name" value="Carbamoyl phosphate synthetase, large subunit connection domain"/>
    <property type="match status" value="1"/>
</dbReference>
<dbReference type="SUPFAM" id="SSF56059">
    <property type="entry name" value="Glutathione synthetase ATP-binding domain-like"/>
    <property type="match status" value="2"/>
</dbReference>
<dbReference type="SUPFAM" id="SSF52335">
    <property type="entry name" value="Methylglyoxal synthase-like"/>
    <property type="match status" value="1"/>
</dbReference>
<dbReference type="SUPFAM" id="SSF52440">
    <property type="entry name" value="PreATP-grasp domain"/>
    <property type="match status" value="2"/>
</dbReference>
<dbReference type="PROSITE" id="PS50975">
    <property type="entry name" value="ATP_GRASP"/>
    <property type="match status" value="2"/>
</dbReference>
<dbReference type="PROSITE" id="PS00866">
    <property type="entry name" value="CPSASE_1"/>
    <property type="match status" value="2"/>
</dbReference>
<dbReference type="PROSITE" id="PS00867">
    <property type="entry name" value="CPSASE_2"/>
    <property type="match status" value="2"/>
</dbReference>
<dbReference type="PROSITE" id="PS51855">
    <property type="entry name" value="MGS"/>
    <property type="match status" value="1"/>
</dbReference>